<comment type="similarity">
    <text evidence="1">Belongs to the bacterial ribosomal protein bL35 family.</text>
</comment>
<accession>P66269</accession>
<accession>P56057</accession>
<organism>
    <name type="scientific">Helicobacter pylori (strain ATCC 700392 / 26695)</name>
    <name type="common">Campylobacter pylori</name>
    <dbReference type="NCBI Taxonomy" id="85962"/>
    <lineage>
        <taxon>Bacteria</taxon>
        <taxon>Pseudomonadati</taxon>
        <taxon>Campylobacterota</taxon>
        <taxon>Epsilonproteobacteria</taxon>
        <taxon>Campylobacterales</taxon>
        <taxon>Helicobacteraceae</taxon>
        <taxon>Helicobacter</taxon>
    </lineage>
</organism>
<protein>
    <recommendedName>
        <fullName evidence="1">Large ribosomal subunit protein bL35</fullName>
    </recommendedName>
    <alternativeName>
        <fullName evidence="3">50S ribosomal protein L35</fullName>
    </alternativeName>
</protein>
<keyword id="KW-1185">Reference proteome</keyword>
<keyword id="KW-0687">Ribonucleoprotein</keyword>
<keyword id="KW-0689">Ribosomal protein</keyword>
<gene>
    <name evidence="1" type="primary">rpmI</name>
    <name type="ordered locus">HP_0125</name>
</gene>
<evidence type="ECO:0000255" key="1">
    <source>
        <dbReference type="HAMAP-Rule" id="MF_00514"/>
    </source>
</evidence>
<evidence type="ECO:0000256" key="2">
    <source>
        <dbReference type="SAM" id="MobiDB-lite"/>
    </source>
</evidence>
<evidence type="ECO:0000305" key="3"/>
<name>RL35_HELPY</name>
<dbReference type="EMBL" id="AE000511">
    <property type="protein sequence ID" value="AAD07195.1"/>
    <property type="molecule type" value="Genomic_DNA"/>
</dbReference>
<dbReference type="PIR" id="E64535">
    <property type="entry name" value="E64535"/>
</dbReference>
<dbReference type="RefSeq" id="NP_206925.1">
    <property type="nucleotide sequence ID" value="NC_000915.1"/>
</dbReference>
<dbReference type="RefSeq" id="WP_001125542.1">
    <property type="nucleotide sequence ID" value="NC_018939.1"/>
</dbReference>
<dbReference type="SMR" id="P66269"/>
<dbReference type="FunCoup" id="P66269">
    <property type="interactions" value="268"/>
</dbReference>
<dbReference type="IntAct" id="P66269">
    <property type="interactions" value="3"/>
</dbReference>
<dbReference type="STRING" id="85962.HP_0125"/>
<dbReference type="PaxDb" id="85962-C694_00620"/>
<dbReference type="EnsemblBacteria" id="AAD07195">
    <property type="protein sequence ID" value="AAD07195"/>
    <property type="gene ID" value="HP_0125"/>
</dbReference>
<dbReference type="GeneID" id="93236496"/>
<dbReference type="KEGG" id="heo:C694_00620"/>
<dbReference type="KEGG" id="hpy:HP_0125"/>
<dbReference type="PATRIC" id="fig|85962.47.peg.135"/>
<dbReference type="eggNOG" id="COG0291">
    <property type="taxonomic scope" value="Bacteria"/>
</dbReference>
<dbReference type="InParanoid" id="P66269"/>
<dbReference type="OrthoDB" id="9804851at2"/>
<dbReference type="PhylomeDB" id="P66269"/>
<dbReference type="Proteomes" id="UP000000429">
    <property type="component" value="Chromosome"/>
</dbReference>
<dbReference type="GO" id="GO:0022625">
    <property type="term" value="C:cytosolic large ribosomal subunit"/>
    <property type="evidence" value="ECO:0000318"/>
    <property type="project" value="GO_Central"/>
</dbReference>
<dbReference type="GO" id="GO:0003735">
    <property type="term" value="F:structural constituent of ribosome"/>
    <property type="evidence" value="ECO:0000318"/>
    <property type="project" value="GO_Central"/>
</dbReference>
<dbReference type="GO" id="GO:0006412">
    <property type="term" value="P:translation"/>
    <property type="evidence" value="ECO:0007669"/>
    <property type="project" value="UniProtKB-UniRule"/>
</dbReference>
<dbReference type="FunFam" id="4.10.410.60:FF:000001">
    <property type="entry name" value="50S ribosomal protein L35"/>
    <property type="match status" value="1"/>
</dbReference>
<dbReference type="Gene3D" id="4.10.410.60">
    <property type="match status" value="1"/>
</dbReference>
<dbReference type="HAMAP" id="MF_00514">
    <property type="entry name" value="Ribosomal_bL35"/>
    <property type="match status" value="1"/>
</dbReference>
<dbReference type="InterPro" id="IPR001706">
    <property type="entry name" value="Ribosomal_bL35"/>
</dbReference>
<dbReference type="InterPro" id="IPR021137">
    <property type="entry name" value="Ribosomal_bL35-like"/>
</dbReference>
<dbReference type="InterPro" id="IPR018265">
    <property type="entry name" value="Ribosomal_bL35_CS"/>
</dbReference>
<dbReference type="InterPro" id="IPR037229">
    <property type="entry name" value="Ribosomal_bL35_sf"/>
</dbReference>
<dbReference type="NCBIfam" id="TIGR00001">
    <property type="entry name" value="rpmI_bact"/>
    <property type="match status" value="1"/>
</dbReference>
<dbReference type="PANTHER" id="PTHR33343">
    <property type="entry name" value="54S RIBOSOMAL PROTEIN BL35M"/>
    <property type="match status" value="1"/>
</dbReference>
<dbReference type="PANTHER" id="PTHR33343:SF1">
    <property type="entry name" value="LARGE RIBOSOMAL SUBUNIT PROTEIN BL35M"/>
    <property type="match status" value="1"/>
</dbReference>
<dbReference type="Pfam" id="PF01632">
    <property type="entry name" value="Ribosomal_L35p"/>
    <property type="match status" value="1"/>
</dbReference>
<dbReference type="PRINTS" id="PR00064">
    <property type="entry name" value="RIBOSOMALL35"/>
</dbReference>
<dbReference type="SUPFAM" id="SSF143034">
    <property type="entry name" value="L35p-like"/>
    <property type="match status" value="1"/>
</dbReference>
<dbReference type="PROSITE" id="PS00936">
    <property type="entry name" value="RIBOSOMAL_L35"/>
    <property type="match status" value="1"/>
</dbReference>
<feature type="chain" id="PRO_0000177368" description="Large ribosomal subunit protein bL35">
    <location>
        <begin position="1"/>
        <end position="64"/>
    </location>
</feature>
<feature type="region of interest" description="Disordered" evidence="2">
    <location>
        <begin position="38"/>
        <end position="64"/>
    </location>
</feature>
<feature type="compositionally biased region" description="Basic residues" evidence="2">
    <location>
        <begin position="38"/>
        <end position="53"/>
    </location>
</feature>
<sequence length="64" mass="7260">MPKMKTNRGASKRFKVKKNLIKRGSAFKSHILTKKSPKRKANLNAPKHVHHTNAHSVMSLLCRA</sequence>
<reference key="1">
    <citation type="journal article" date="1997" name="Nature">
        <title>The complete genome sequence of the gastric pathogen Helicobacter pylori.</title>
        <authorList>
            <person name="Tomb J.-F."/>
            <person name="White O."/>
            <person name="Kerlavage A.R."/>
            <person name="Clayton R.A."/>
            <person name="Sutton G.G."/>
            <person name="Fleischmann R.D."/>
            <person name="Ketchum K.A."/>
            <person name="Klenk H.-P."/>
            <person name="Gill S.R."/>
            <person name="Dougherty B.A."/>
            <person name="Nelson K.E."/>
            <person name="Quackenbush J."/>
            <person name="Zhou L."/>
            <person name="Kirkness E.F."/>
            <person name="Peterson S.N."/>
            <person name="Loftus B.J."/>
            <person name="Richardson D.L."/>
            <person name="Dodson R.J."/>
            <person name="Khalak H.G."/>
            <person name="Glodek A."/>
            <person name="McKenney K."/>
            <person name="FitzGerald L.M."/>
            <person name="Lee N."/>
            <person name="Adams M.D."/>
            <person name="Hickey E.K."/>
            <person name="Berg D.E."/>
            <person name="Gocayne J.D."/>
            <person name="Utterback T.R."/>
            <person name="Peterson J.D."/>
            <person name="Kelley J.M."/>
            <person name="Cotton M.D."/>
            <person name="Weidman J.F."/>
            <person name="Fujii C."/>
            <person name="Bowman C."/>
            <person name="Watthey L."/>
            <person name="Wallin E."/>
            <person name="Hayes W.S."/>
            <person name="Borodovsky M."/>
            <person name="Karp P.D."/>
            <person name="Smith H.O."/>
            <person name="Fraser C.M."/>
            <person name="Venter J.C."/>
        </authorList>
    </citation>
    <scope>NUCLEOTIDE SEQUENCE [LARGE SCALE GENOMIC DNA]</scope>
    <source>
        <strain>ATCC 700392 / 26695</strain>
    </source>
</reference>
<proteinExistence type="inferred from homology"/>